<accession>P11725</accession>
<name>OTC_MOUSE</name>
<protein>
    <recommendedName>
        <fullName evidence="5">Ornithine transcarbamylase, mitochondrial</fullName>
        <shortName evidence="4">OTCase</shortName>
        <ecNumber evidence="2">2.1.3.3</ecNumber>
    </recommendedName>
    <alternativeName>
        <fullName>Ornithine carbamoyltransferase, mitochondrial</fullName>
    </alternativeName>
</protein>
<proteinExistence type="evidence at protein level"/>
<keyword id="KW-0007">Acetylation</keyword>
<keyword id="KW-0028">Amino-acid biosynthesis</keyword>
<keyword id="KW-0055">Arginine biosynthesis</keyword>
<keyword id="KW-0225">Disease variant</keyword>
<keyword id="KW-0496">Mitochondrion</keyword>
<keyword id="KW-0597">Phosphoprotein</keyword>
<keyword id="KW-1185">Reference proteome</keyword>
<keyword id="KW-0808">Transferase</keyword>
<keyword id="KW-0809">Transit peptide</keyword>
<keyword id="KW-0835">Urea cycle</keyword>
<feature type="transit peptide" description="Mitochondrion" evidence="2">
    <location>
        <begin position="1"/>
        <end position="32"/>
    </location>
</feature>
<feature type="chain" id="PRO_0000020335" description="Ornithine transcarbamylase, mitochondrial">
    <location>
        <begin position="33"/>
        <end position="354"/>
    </location>
</feature>
<feature type="active site" evidence="1">
    <location>
        <position position="303"/>
    </location>
</feature>
<feature type="binding site" evidence="1">
    <location>
        <begin position="90"/>
        <end position="94"/>
    </location>
    <ligand>
        <name>carbamoyl phosphate</name>
        <dbReference type="ChEBI" id="CHEBI:58228"/>
    </ligand>
</feature>
<feature type="binding site" evidence="1">
    <location>
        <position position="141"/>
    </location>
    <ligand>
        <name>carbamoyl phosphate</name>
        <dbReference type="ChEBI" id="CHEBI:58228"/>
    </ligand>
</feature>
<feature type="binding site" evidence="1">
    <location>
        <position position="141"/>
    </location>
    <ligand>
        <name>L-ornithine</name>
        <dbReference type="ChEBI" id="CHEBI:46911"/>
    </ligand>
</feature>
<feature type="binding site" evidence="1">
    <location>
        <position position="168"/>
    </location>
    <ligand>
        <name>carbamoyl phosphate</name>
        <dbReference type="ChEBI" id="CHEBI:58228"/>
    </ligand>
</feature>
<feature type="binding site" evidence="1">
    <location>
        <position position="199"/>
    </location>
    <ligand>
        <name>L-ornithine</name>
        <dbReference type="ChEBI" id="CHEBI:46911"/>
    </ligand>
</feature>
<feature type="binding site" evidence="1">
    <location>
        <begin position="263"/>
        <end position="267"/>
    </location>
    <ligand>
        <name>L-ornithine</name>
        <dbReference type="ChEBI" id="CHEBI:46911"/>
    </ligand>
</feature>
<feature type="binding site" evidence="1">
    <location>
        <begin position="302"/>
        <end position="305"/>
    </location>
    <ligand>
        <name>L-ornithine</name>
        <dbReference type="ChEBI" id="CHEBI:46911"/>
    </ligand>
</feature>
<feature type="binding site" evidence="1">
    <location>
        <position position="330"/>
    </location>
    <ligand>
        <name>carbamoyl phosphate</name>
        <dbReference type="ChEBI" id="CHEBI:58228"/>
    </ligand>
</feature>
<feature type="binding site" evidence="1">
    <location>
        <position position="330"/>
    </location>
    <ligand>
        <name>L-ornithine</name>
        <dbReference type="ChEBI" id="CHEBI:46911"/>
    </ligand>
</feature>
<feature type="modified residue" description="N6-acetyllysine; alternate" evidence="7">
    <location>
        <position position="70"/>
    </location>
</feature>
<feature type="modified residue" description="N6-succinyllysine; alternate" evidence="8">
    <location>
        <position position="70"/>
    </location>
</feature>
<feature type="modified residue" description="N6-succinyllysine" evidence="8">
    <location>
        <position position="80"/>
    </location>
</feature>
<feature type="modified residue" description="N6-acetyllysine; alternate" evidence="7">
    <location>
        <position position="88"/>
    </location>
</feature>
<feature type="modified residue" description="N6-succinyllysine; alternate" evidence="8">
    <location>
        <position position="88"/>
    </location>
</feature>
<feature type="modified residue" description="Phosphoserine" evidence="2">
    <location>
        <position position="133"/>
    </location>
</feature>
<feature type="modified residue" description="N6-acetyllysine; alternate" evidence="7">
    <location>
        <position position="144"/>
    </location>
</feature>
<feature type="modified residue" description="N6-succinyllysine; alternate" evidence="8">
    <location>
        <position position="144"/>
    </location>
</feature>
<feature type="modified residue" description="N6-acetyllysine; alternate" evidence="7">
    <location>
        <position position="221"/>
    </location>
</feature>
<feature type="modified residue" description="N6-succinyllysine; alternate" evidence="8">
    <location>
        <position position="221"/>
    </location>
</feature>
<feature type="modified residue" description="N6-acetyllysine; alternate" evidence="7">
    <location>
        <position position="231"/>
    </location>
</feature>
<feature type="modified residue" description="N6-succinyllysine; alternate" evidence="8">
    <location>
        <position position="231"/>
    </location>
</feature>
<feature type="modified residue" description="N6-acetyllysine; alternate" evidence="7">
    <location>
        <position position="238"/>
    </location>
</feature>
<feature type="modified residue" description="N6-succinyllysine; alternate" evidence="8">
    <location>
        <position position="238"/>
    </location>
</feature>
<feature type="modified residue" description="N6-acetyllysine" evidence="7">
    <location>
        <position position="243"/>
    </location>
</feature>
<feature type="modified residue" description="N6-succinyllysine" evidence="8">
    <location>
        <position position="274"/>
    </location>
</feature>
<feature type="modified residue" description="N6-succinyllysine" evidence="8">
    <location>
        <position position="289"/>
    </location>
</feature>
<feature type="modified residue" description="N6-acetyllysine; alternate" evidence="7">
    <location>
        <position position="292"/>
    </location>
</feature>
<feature type="modified residue" description="N6-succinyllysine; alternate" evidence="8">
    <location>
        <position position="292"/>
    </location>
</feature>
<feature type="modified residue" description="N6-acetyllysine; alternate" evidence="7">
    <location>
        <position position="307"/>
    </location>
</feature>
<feature type="modified residue" description="N6-succinyllysine; alternate" evidence="8">
    <location>
        <position position="307"/>
    </location>
</feature>
<feature type="sequence variant" description="In spf." evidence="3">
    <original>H</original>
    <variation>N</variation>
    <location>
        <position position="117"/>
    </location>
</feature>
<feature type="sequence conflict" description="In Ref. 2; CAA30121." evidence="4" ref="2">
    <original>G</original>
    <variation>R</variation>
    <location>
        <position position="195"/>
    </location>
</feature>
<sequence length="354" mass="39765">MLSNLRILLNNAALRKGHTSVVRHFWCGKPVQSQVQLKGRDLLTLKNFTGEEIQYMLWLSADLKFRIKQKGEYLPLLQGKSLGMIFEKRSTRTRLSTETGFALLGGHPSFLTTQDIHLGVNESLTDTARVLSSMTDAVLARVYKQSDLDTLAKEASIPIVNGLSDLYHPIQILADYLTLQEHYGSLKGLTLSWIGDGNNILHSIMMSAAKFGMHLQAATPKGYEPDPNIVKLAEQYAKENGTKLSMTNDPLEAARGGNVLITDTWISMGQEDEKKKRLQAFQGYQVTMKTAKVAASDWTFLHCLPRKPEEVDDEVFYSPRSLVFPEAENRKWTIMAVMVSLLTDYSPVLQKPKF</sequence>
<reference key="1">
    <citation type="journal article" date="1987" name="Science">
        <title>The molecular basis of the sparse fur mouse mutation.</title>
        <authorList>
            <person name="Veres G."/>
            <person name="Gibbs R.A."/>
            <person name="Scherer S.E."/>
            <person name="Caskey C.T."/>
        </authorList>
    </citation>
    <scope>NUCLEOTIDE SEQUENCE [MRNA]</scope>
    <scope>VARIANT SPF ASN-117</scope>
    <scope>DISEASE</scope>
    <source>
        <strain>C57BL/6J</strain>
    </source>
</reference>
<reference key="2">
    <citation type="journal article" date="1988" name="Nucleic Acids Res.">
        <title>The genetic structure of mouse ornithine transcarbamylase.</title>
        <authorList>
            <person name="Scherer S.E."/>
            <person name="Veres G."/>
            <person name="Caskey C.T."/>
        </authorList>
    </citation>
    <scope>NUCLEOTIDE SEQUENCE [GENOMIC DNA]</scope>
</reference>
<reference key="3">
    <citation type="journal article" date="1986" name="J. Biol. Chem.">
        <title>The 5' flanking region of the ornithine transcarbamylase gene contains DNA sequences regulating tissue-specific expression.</title>
        <authorList>
            <person name="Veres G."/>
            <person name="Craigen W.J."/>
            <person name="Caskey C.T."/>
        </authorList>
    </citation>
    <scope>NUCLEOTIDE SEQUENCE [GENOMIC DNA] OF 1-26</scope>
    <source>
        <strain>C57BL/6J</strain>
    </source>
</reference>
<reference key="4">
    <citation type="journal article" date="2010" name="Cell">
        <title>A tissue-specific atlas of mouse protein phosphorylation and expression.</title>
        <authorList>
            <person name="Huttlin E.L."/>
            <person name="Jedrychowski M.P."/>
            <person name="Elias J.E."/>
            <person name="Goswami T."/>
            <person name="Rad R."/>
            <person name="Beausoleil S.A."/>
            <person name="Villen J."/>
            <person name="Haas W."/>
            <person name="Sowa M.E."/>
            <person name="Gygi S.P."/>
        </authorList>
    </citation>
    <scope>IDENTIFICATION BY MASS SPECTROMETRY [LARGE SCALE ANALYSIS]</scope>
    <source>
        <tissue>Liver</tissue>
    </source>
</reference>
<reference key="5">
    <citation type="journal article" date="2013" name="Mol. Cell">
        <title>SIRT5-mediated lysine desuccinylation impacts diverse metabolic pathways.</title>
        <authorList>
            <person name="Park J."/>
            <person name="Chen Y."/>
            <person name="Tishkoff D.X."/>
            <person name="Peng C."/>
            <person name="Tan M."/>
            <person name="Dai L."/>
            <person name="Xie Z."/>
            <person name="Zhang Y."/>
            <person name="Zwaans B.M."/>
            <person name="Skinner M.E."/>
            <person name="Lombard D.B."/>
            <person name="Zhao Y."/>
        </authorList>
    </citation>
    <scope>SUCCINYLATION [LARGE SCALE ANALYSIS] AT LYS-70; LYS-80; LYS-88; LYS-144; LYS-221; LYS-231; LYS-238; LYS-274; LYS-289; LYS-292 AND LYS-307</scope>
    <scope>IDENTIFICATION BY MASS SPECTROMETRY [LARGE SCALE ANALYSIS]</scope>
    <source>
        <tissue>Liver</tissue>
    </source>
</reference>
<reference key="6">
    <citation type="journal article" date="2013" name="Proc. Natl. Acad. Sci. U.S.A.">
        <title>Label-free quantitative proteomics of the lysine acetylome in mitochondria identifies substrates of SIRT3 in metabolic pathways.</title>
        <authorList>
            <person name="Rardin M.J."/>
            <person name="Newman J.C."/>
            <person name="Held J.M."/>
            <person name="Cusack M.P."/>
            <person name="Sorensen D.J."/>
            <person name="Li B."/>
            <person name="Schilling B."/>
            <person name="Mooney S.D."/>
            <person name="Kahn C.R."/>
            <person name="Verdin E."/>
            <person name="Gibson B.W."/>
        </authorList>
    </citation>
    <scope>ACETYLATION [LARGE SCALE ANALYSIS] AT LYS-70; LYS-88; LYS-144; LYS-221; LYS-231; LYS-238; LYS-243; LYS-292 AND LYS-307</scope>
    <scope>IDENTIFICATION BY MASS SPECTROMETRY [LARGE SCALE ANALYSIS]</scope>
    <source>
        <tissue>Liver</tissue>
    </source>
</reference>
<evidence type="ECO:0000250" key="1"/>
<evidence type="ECO:0000250" key="2">
    <source>
        <dbReference type="UniProtKB" id="P00480"/>
    </source>
</evidence>
<evidence type="ECO:0000269" key="3">
    <source>
    </source>
</evidence>
<evidence type="ECO:0000305" key="4"/>
<evidence type="ECO:0000305" key="5">
    <source>
    </source>
</evidence>
<evidence type="ECO:0000312" key="6">
    <source>
        <dbReference type="MGI" id="MGI:97448"/>
    </source>
</evidence>
<evidence type="ECO:0007744" key="7">
    <source>
    </source>
</evidence>
<evidence type="ECO:0007744" key="8">
    <source>
    </source>
</evidence>
<dbReference type="EC" id="2.1.3.3" evidence="2"/>
<dbReference type="EMBL" id="M17030">
    <property type="protein sequence ID" value="AAA39865.1"/>
    <property type="molecule type" value="mRNA"/>
</dbReference>
<dbReference type="EMBL" id="M12716">
    <property type="protein sequence ID" value="AAA39864.1"/>
    <property type="status" value="ALT_SEQ"/>
    <property type="molecule type" value="Genomic_DNA"/>
</dbReference>
<dbReference type="EMBL" id="X07092">
    <property type="protein sequence ID" value="CAA30121.1"/>
    <property type="molecule type" value="Genomic_DNA"/>
</dbReference>
<dbReference type="EMBL" id="X07093">
    <property type="protein sequence ID" value="CAA30121.1"/>
    <property type="status" value="JOINED"/>
    <property type="molecule type" value="Genomic_DNA"/>
</dbReference>
<dbReference type="EMBL" id="X07094">
    <property type="protein sequence ID" value="CAA30121.1"/>
    <property type="status" value="JOINED"/>
    <property type="molecule type" value="Genomic_DNA"/>
</dbReference>
<dbReference type="EMBL" id="X07095">
    <property type="protein sequence ID" value="CAA30121.1"/>
    <property type="status" value="JOINED"/>
    <property type="molecule type" value="Genomic_DNA"/>
</dbReference>
<dbReference type="EMBL" id="X07096">
    <property type="protein sequence ID" value="CAA30121.1"/>
    <property type="status" value="JOINED"/>
    <property type="molecule type" value="Genomic_DNA"/>
</dbReference>
<dbReference type="EMBL" id="X07097">
    <property type="protein sequence ID" value="CAA30121.1"/>
    <property type="status" value="JOINED"/>
    <property type="molecule type" value="Genomic_DNA"/>
</dbReference>
<dbReference type="EMBL" id="X07098">
    <property type="protein sequence ID" value="CAA30121.1"/>
    <property type="status" value="JOINED"/>
    <property type="molecule type" value="Genomic_DNA"/>
</dbReference>
<dbReference type="EMBL" id="X07099">
    <property type="protein sequence ID" value="CAA30121.1"/>
    <property type="status" value="JOINED"/>
    <property type="molecule type" value="Genomic_DNA"/>
</dbReference>
<dbReference type="EMBL" id="X07100">
    <property type="protein sequence ID" value="CAA30121.1"/>
    <property type="status" value="JOINED"/>
    <property type="molecule type" value="Genomic_DNA"/>
</dbReference>
<dbReference type="CCDS" id="CCDS30015.1"/>
<dbReference type="PIR" id="A43609">
    <property type="entry name" value="OWMS"/>
</dbReference>
<dbReference type="RefSeq" id="NP_032795.1">
    <property type="nucleotide sequence ID" value="NM_008769.5"/>
</dbReference>
<dbReference type="SMR" id="P11725"/>
<dbReference type="BioGRID" id="201986">
    <property type="interactions" value="2"/>
</dbReference>
<dbReference type="FunCoup" id="P11725">
    <property type="interactions" value="672"/>
</dbReference>
<dbReference type="STRING" id="10090.ENSMUSP00000056152"/>
<dbReference type="GlyGen" id="P11725">
    <property type="glycosylation" value="1 site, 1 O-linked glycan (1 site)"/>
</dbReference>
<dbReference type="iPTMnet" id="P11725"/>
<dbReference type="PhosphoSitePlus" id="P11725"/>
<dbReference type="SwissPalm" id="P11725"/>
<dbReference type="jPOST" id="P11725"/>
<dbReference type="PaxDb" id="10090-ENSMUSP00000056152"/>
<dbReference type="PeptideAtlas" id="P11725"/>
<dbReference type="ProteomicsDB" id="294399"/>
<dbReference type="Antibodypedia" id="336">
    <property type="antibodies" value="745 antibodies from 30 providers"/>
</dbReference>
<dbReference type="DNASU" id="18416"/>
<dbReference type="Ensembl" id="ENSMUST00000049910.13">
    <property type="protein sequence ID" value="ENSMUSP00000056152.7"/>
    <property type="gene ID" value="ENSMUSG00000031173.14"/>
</dbReference>
<dbReference type="GeneID" id="18416"/>
<dbReference type="KEGG" id="mmu:18416"/>
<dbReference type="UCSC" id="uc009sqk.1">
    <property type="organism name" value="mouse"/>
</dbReference>
<dbReference type="AGR" id="MGI:97448"/>
<dbReference type="CTD" id="5009"/>
<dbReference type="MGI" id="MGI:97448">
    <property type="gene designation" value="Otc"/>
</dbReference>
<dbReference type="VEuPathDB" id="HostDB:ENSMUSG00000031173"/>
<dbReference type="eggNOG" id="KOG1504">
    <property type="taxonomic scope" value="Eukaryota"/>
</dbReference>
<dbReference type="GeneTree" id="ENSGT00510000047417"/>
<dbReference type="HOGENOM" id="CLU_043846_3_0_1"/>
<dbReference type="InParanoid" id="P11725"/>
<dbReference type="OMA" id="DGNNVCN"/>
<dbReference type="OrthoDB" id="10252326at2759"/>
<dbReference type="PhylomeDB" id="P11725"/>
<dbReference type="TreeFam" id="TF352580"/>
<dbReference type="Reactome" id="R-MMU-1268020">
    <property type="pathway name" value="Mitochondrial protein import"/>
</dbReference>
<dbReference type="Reactome" id="R-MMU-70635">
    <property type="pathway name" value="Urea cycle"/>
</dbReference>
<dbReference type="UniPathway" id="UPA00158">
    <property type="reaction ID" value="UER00271"/>
</dbReference>
<dbReference type="BioGRID-ORCS" id="18416">
    <property type="hits" value="2 hits in 77 CRISPR screens"/>
</dbReference>
<dbReference type="ChiTaRS" id="Otc">
    <property type="organism name" value="mouse"/>
</dbReference>
<dbReference type="PRO" id="PR:P11725"/>
<dbReference type="Proteomes" id="UP000000589">
    <property type="component" value="Chromosome X"/>
</dbReference>
<dbReference type="RNAct" id="P11725">
    <property type="molecule type" value="protein"/>
</dbReference>
<dbReference type="Bgee" id="ENSMUSG00000031173">
    <property type="expression patterns" value="Expressed in left lobe of liver and 41 other cell types or tissues"/>
</dbReference>
<dbReference type="ExpressionAtlas" id="P11725">
    <property type="expression patterns" value="baseline and differential"/>
</dbReference>
<dbReference type="GO" id="GO:0005743">
    <property type="term" value="C:mitochondrial inner membrane"/>
    <property type="evidence" value="ECO:0007005"/>
    <property type="project" value="MGI"/>
</dbReference>
<dbReference type="GO" id="GO:0005759">
    <property type="term" value="C:mitochondrial matrix"/>
    <property type="evidence" value="ECO:0007669"/>
    <property type="project" value="UniProtKB-SubCell"/>
</dbReference>
<dbReference type="GO" id="GO:0005739">
    <property type="term" value="C:mitochondrion"/>
    <property type="evidence" value="ECO:0007005"/>
    <property type="project" value="MGI"/>
</dbReference>
<dbReference type="GO" id="GO:0016597">
    <property type="term" value="F:amino acid binding"/>
    <property type="evidence" value="ECO:0007669"/>
    <property type="project" value="Ensembl"/>
</dbReference>
<dbReference type="GO" id="GO:0042802">
    <property type="term" value="F:identical protein binding"/>
    <property type="evidence" value="ECO:0007669"/>
    <property type="project" value="Ensembl"/>
</dbReference>
<dbReference type="GO" id="GO:0004585">
    <property type="term" value="F:ornithine carbamoyltransferase activity"/>
    <property type="evidence" value="ECO:0007669"/>
    <property type="project" value="UniProtKB-EC"/>
</dbReference>
<dbReference type="GO" id="GO:0042301">
    <property type="term" value="F:phosphate ion binding"/>
    <property type="evidence" value="ECO:0007669"/>
    <property type="project" value="Ensembl"/>
</dbReference>
<dbReference type="GO" id="GO:0005543">
    <property type="term" value="F:phospholipid binding"/>
    <property type="evidence" value="ECO:0007669"/>
    <property type="project" value="Ensembl"/>
</dbReference>
<dbReference type="GO" id="GO:0097272">
    <property type="term" value="P:ammonium homeostasis"/>
    <property type="evidence" value="ECO:0007669"/>
    <property type="project" value="Ensembl"/>
</dbReference>
<dbReference type="GO" id="GO:0019240">
    <property type="term" value="P:citrulline biosynthetic process"/>
    <property type="evidence" value="ECO:0007669"/>
    <property type="project" value="Ensembl"/>
</dbReference>
<dbReference type="GO" id="GO:0006526">
    <property type="term" value="P:L-arginine biosynthetic process"/>
    <property type="evidence" value="ECO:0007669"/>
    <property type="project" value="UniProtKB-KW"/>
</dbReference>
<dbReference type="GO" id="GO:0001889">
    <property type="term" value="P:liver development"/>
    <property type="evidence" value="ECO:0007669"/>
    <property type="project" value="Ensembl"/>
</dbReference>
<dbReference type="GO" id="GO:0007494">
    <property type="term" value="P:midgut development"/>
    <property type="evidence" value="ECO:0007669"/>
    <property type="project" value="Ensembl"/>
</dbReference>
<dbReference type="GO" id="GO:0055081">
    <property type="term" value="P:monoatomic anion homeostasis"/>
    <property type="evidence" value="ECO:0007669"/>
    <property type="project" value="Ensembl"/>
</dbReference>
<dbReference type="GO" id="GO:0006593">
    <property type="term" value="P:ornithine catabolic process"/>
    <property type="evidence" value="ECO:0007669"/>
    <property type="project" value="Ensembl"/>
</dbReference>
<dbReference type="GO" id="GO:0070781">
    <property type="term" value="P:response to biotin"/>
    <property type="evidence" value="ECO:0007669"/>
    <property type="project" value="Ensembl"/>
</dbReference>
<dbReference type="GO" id="GO:0032868">
    <property type="term" value="P:response to insulin"/>
    <property type="evidence" value="ECO:0007669"/>
    <property type="project" value="Ensembl"/>
</dbReference>
<dbReference type="GO" id="GO:0009410">
    <property type="term" value="P:response to xenobiotic stimulus"/>
    <property type="evidence" value="ECO:0007669"/>
    <property type="project" value="Ensembl"/>
</dbReference>
<dbReference type="GO" id="GO:0010043">
    <property type="term" value="P:response to zinc ion"/>
    <property type="evidence" value="ECO:0007669"/>
    <property type="project" value="Ensembl"/>
</dbReference>
<dbReference type="GO" id="GO:0000050">
    <property type="term" value="P:urea cycle"/>
    <property type="evidence" value="ECO:0007669"/>
    <property type="project" value="UniProtKB-UniPathway"/>
</dbReference>
<dbReference type="FunFam" id="3.40.50.1370:FF:000009">
    <property type="entry name" value="Ornithine carbamoyltransferase, mitochondrial"/>
    <property type="match status" value="1"/>
</dbReference>
<dbReference type="FunFam" id="3.40.50.1370:FF:000010">
    <property type="entry name" value="Ornithine carbamoyltransferase, mitochondrial"/>
    <property type="match status" value="1"/>
</dbReference>
<dbReference type="Gene3D" id="3.40.50.1370">
    <property type="entry name" value="Aspartate/ornithine carbamoyltransferase"/>
    <property type="match status" value="2"/>
</dbReference>
<dbReference type="InterPro" id="IPR006132">
    <property type="entry name" value="Asp/Orn_carbamoyltranf_P-bd"/>
</dbReference>
<dbReference type="InterPro" id="IPR006130">
    <property type="entry name" value="Asp/Orn_carbamoylTrfase"/>
</dbReference>
<dbReference type="InterPro" id="IPR036901">
    <property type="entry name" value="Asp/Orn_carbamoylTrfase_sf"/>
</dbReference>
<dbReference type="InterPro" id="IPR006131">
    <property type="entry name" value="Asp_carbamoyltransf_Asp/Orn-bd"/>
</dbReference>
<dbReference type="InterPro" id="IPR002292">
    <property type="entry name" value="Orn/put_carbamltrans"/>
</dbReference>
<dbReference type="NCBIfam" id="TIGR00658">
    <property type="entry name" value="orni_carb_tr"/>
    <property type="match status" value="1"/>
</dbReference>
<dbReference type="NCBIfam" id="NF001986">
    <property type="entry name" value="PRK00779.1"/>
    <property type="match status" value="1"/>
</dbReference>
<dbReference type="PANTHER" id="PTHR45753">
    <property type="entry name" value="ORNITHINE CARBAMOYLTRANSFERASE, MITOCHONDRIAL"/>
    <property type="match status" value="1"/>
</dbReference>
<dbReference type="PANTHER" id="PTHR45753:SF3">
    <property type="entry name" value="ORNITHINE TRANSCARBAMYLASE, MITOCHONDRIAL"/>
    <property type="match status" value="1"/>
</dbReference>
<dbReference type="Pfam" id="PF00185">
    <property type="entry name" value="OTCace"/>
    <property type="match status" value="1"/>
</dbReference>
<dbReference type="Pfam" id="PF02729">
    <property type="entry name" value="OTCace_N"/>
    <property type="match status" value="1"/>
</dbReference>
<dbReference type="PRINTS" id="PR00100">
    <property type="entry name" value="AOTCASE"/>
</dbReference>
<dbReference type="PRINTS" id="PR00102">
    <property type="entry name" value="OTCASE"/>
</dbReference>
<dbReference type="SUPFAM" id="SSF53671">
    <property type="entry name" value="Aspartate/ornithine carbamoyltransferase"/>
    <property type="match status" value="1"/>
</dbReference>
<dbReference type="PROSITE" id="PS00097">
    <property type="entry name" value="CARBAMOYLTRANSFERASE"/>
    <property type="match status" value="1"/>
</dbReference>
<gene>
    <name evidence="6" type="primary">Otc</name>
</gene>
<organism>
    <name type="scientific">Mus musculus</name>
    <name type="common">Mouse</name>
    <dbReference type="NCBI Taxonomy" id="10090"/>
    <lineage>
        <taxon>Eukaryota</taxon>
        <taxon>Metazoa</taxon>
        <taxon>Chordata</taxon>
        <taxon>Craniata</taxon>
        <taxon>Vertebrata</taxon>
        <taxon>Euteleostomi</taxon>
        <taxon>Mammalia</taxon>
        <taxon>Eutheria</taxon>
        <taxon>Euarchontoglires</taxon>
        <taxon>Glires</taxon>
        <taxon>Rodentia</taxon>
        <taxon>Myomorpha</taxon>
        <taxon>Muroidea</taxon>
        <taxon>Muridae</taxon>
        <taxon>Murinae</taxon>
        <taxon>Mus</taxon>
        <taxon>Mus</taxon>
    </lineage>
</organism>
<comment type="function">
    <text evidence="2">Catalyzes the second step of the urea cycle, the condensation of carbamoyl phosphate with L-ornithine to form L-citrulline. The urea cycle ensures the detoxification of ammonia by converting it to urea for excretion.</text>
</comment>
<comment type="catalytic activity">
    <reaction evidence="2">
        <text>carbamoyl phosphate + L-ornithine = L-citrulline + phosphate + H(+)</text>
        <dbReference type="Rhea" id="RHEA:19513"/>
        <dbReference type="ChEBI" id="CHEBI:15378"/>
        <dbReference type="ChEBI" id="CHEBI:43474"/>
        <dbReference type="ChEBI" id="CHEBI:46911"/>
        <dbReference type="ChEBI" id="CHEBI:57743"/>
        <dbReference type="ChEBI" id="CHEBI:58228"/>
        <dbReference type="EC" id="2.1.3.3"/>
    </reaction>
    <physiologicalReaction direction="right-to-left" evidence="2">
        <dbReference type="Rhea" id="RHEA:19515"/>
    </physiologicalReaction>
</comment>
<comment type="activity regulation">
    <text evidence="2">Negatively regulated by lysine acetylation.</text>
</comment>
<comment type="pathway">
    <text evidence="2">Nitrogen metabolism; urea cycle; L-citrulline from L-ornithine and carbamoyl phosphate: step 1/1.</text>
</comment>
<comment type="subunit">
    <text evidence="2">Homotrimer.</text>
</comment>
<comment type="subcellular location">
    <subcellularLocation>
        <location evidence="2">Mitochondrion matrix</location>
    </subcellularLocation>
</comment>
<comment type="PTM">
    <text evidence="2">Acetylation at Lys-88 negatively regulates ornithine carbamoyltransferase activity in response to nutrient signals.</text>
</comment>
<comment type="disease">
    <text evidence="3">Defects in Otc are the cause of the Sparse fur (spf) phenotype. Spf mouse have an OTCase with an overall decrease in activity, and altered substrate affinity.</text>
</comment>
<comment type="similarity">
    <text evidence="4">Belongs to the aspartate/ornithine carbamoyltransferase superfamily. OTCase family.</text>
</comment>